<sequence length="520" mass="56158">MAALKLLSSGLRLCASARGSGATWYKGCVCSFSTSAHRHTKFYTDPVEAVKDIPDGATVLVGGFGLCGIPENLIDALLKTGVKGLTAVSNNAGVDNFGLGLLLRSKQIKRMVSSYVGENAEFERQYLSGELEVELTPQGTLAERIRAGGAGVPAFYTPTGYGTLVQEGGSPIKYNKDGSVAIASKPREVREFNGQHFILEEAITGDFALVKAWKADRAGNVIFRKSARNFNLPMCKAAETTVVEVEEIVDIGAFAPEDIHIPQIYVHRLIKGEKYEKRIERLSIRKEGDGEAKSAKPGDDVRERIIKRAALEFEDGMYANLGIGIPLLASNFISPNITVHLQSENGVLGLGPYPRQHEADADLINAGKETVTILPGASFFSSDESFAMIRGGHVDLTMLGAMQVSKYGDLANWMIPGKMVKGMGGAMDLVSSAKTKVVVTMEHSAKGNAHKIMEKCTLPLTGKQCVNRIITEKAVFDVDKKKGLTLIELWEGLTVDDVQKSTGCDFAVSPKLMPMQQIAN</sequence>
<feature type="transit peptide" description="Mitochondrion" evidence="12">
    <location>
        <begin position="1"/>
        <end position="39"/>
    </location>
</feature>
<feature type="chain" id="PRO_0000002413" description="Succinyl-CoA:3-ketoacid coenzyme A transferase 1, mitochondrial">
    <location>
        <begin position="40"/>
        <end position="520"/>
    </location>
</feature>
<feature type="active site" description="5-glutamyl coenzyme A thioester intermediate" evidence="4">
    <location>
        <position position="344"/>
    </location>
</feature>
<feature type="modified residue" description="Phosphoserine" evidence="17">
    <location>
        <position position="170"/>
    </location>
</feature>
<feature type="modified residue" description="N6-succinyllysine" evidence="3">
    <location>
        <position position="185"/>
    </location>
</feature>
<feature type="modified residue" description="N6-succinyllysine" evidence="3">
    <location>
        <position position="418"/>
    </location>
</feature>
<feature type="modified residue" description="N6-succinyllysine" evidence="3">
    <location>
        <position position="421"/>
    </location>
</feature>
<feature type="modified residue" description="N6-succinyllysine" evidence="3">
    <location>
        <position position="455"/>
    </location>
</feature>
<feature type="splice variant" id="VSP_056310" description="In isoform 2." evidence="14">
    <location>
        <begin position="1"/>
        <end position="397"/>
    </location>
</feature>
<feature type="sequence variant" id="VAR_000695" description="In dbSNP:rs75134564." evidence="6 11">
    <original>T</original>
    <variation>M</variation>
    <location>
        <position position="58"/>
    </location>
</feature>
<feature type="sequence variant" id="VAR_085802" description="In SCOTD." evidence="9">
    <location>
        <begin position="124"/>
        <end position="520"/>
    </location>
</feature>
<feature type="sequence variant" id="VAR_000696" description="In SCOTD; dbSNP:rs267606930." evidence="11">
    <original>V</original>
    <variation>E</variation>
    <location>
        <position position="133"/>
    </location>
</feature>
<feature type="sequence variant" id="VAR_065564" description="In SCOTD; partial loss of activity; dbSNP:rs201752548." evidence="6">
    <original>A</original>
    <variation>V</variation>
    <location>
        <position position="215"/>
    </location>
</feature>
<feature type="sequence variant" id="VAR_010337" description="In SCOTD; dbSNP:rs121909302." evidence="5">
    <original>G</original>
    <variation>E</variation>
    <location>
        <position position="219"/>
    </location>
</feature>
<feature type="sequence variant" id="VAR_010338" description="In SCOTD; dbSNP:rs121909303." evidence="5">
    <original>V</original>
    <variation>M</variation>
    <location>
        <position position="221"/>
    </location>
</feature>
<feature type="sequence variant" id="VAR_065565" description="In SCOTD; loss of activity; dbSNP:rs368841359." evidence="6">
    <original>S</original>
    <variation>N</variation>
    <location>
        <position position="226"/>
    </location>
</feature>
<feature type="sequence variant" id="VAR_085803" description="In SCOTD; uncertain significance; dbSNP:rs727504063." evidence="8">
    <original>V</original>
    <variation>F</variation>
    <location>
        <position position="245"/>
    </location>
</feature>
<feature type="sequence variant" id="VAR_085804" description="In SCOTD; uncertain significance; dbSNP:rs886043862." evidence="9">
    <original>I</original>
    <variation>K</variation>
    <location>
        <position position="270"/>
    </location>
</feature>
<feature type="sequence variant" id="VAR_085805" description="In SCOTD; uncertain significance." evidence="9">
    <original>E</original>
    <variation>A</variation>
    <location>
        <position position="280"/>
    </location>
</feature>
<feature type="sequence variant" id="VAR_010339" description="In SCOTD; dbSNP:rs121909301." evidence="5">
    <original>G</original>
    <variation>E</variation>
    <location>
        <position position="324"/>
    </location>
</feature>
<feature type="sequence variant" id="VAR_065566" description="In SCOTD; partial loss of activity." evidence="6">
    <original>L</original>
    <variation>P</variation>
    <location>
        <position position="327"/>
    </location>
</feature>
<feature type="sequence variant" id="VAR_065567" description="In SCOTD; loss of activity." evidence="6">
    <original>V</original>
    <variation>F</variation>
    <location>
        <position position="404"/>
    </location>
</feature>
<feature type="sequence variant" id="VAR_065568" description="In SCOTD; loss of activity." evidence="6">
    <original>S</original>
    <variation>P</variation>
    <location>
        <position position="405"/>
    </location>
</feature>
<feature type="sequence variant" id="VAR_085806" description="In SCOTD; uncertain significance." evidence="9">
    <original>V</original>
    <variation>M</variation>
    <location>
        <position position="437"/>
    </location>
</feature>
<feature type="sequence variant" id="VAR_000697" description="In SCOTD; dbSNP:rs121909300." evidence="11">
    <original>C</original>
    <variation>F</variation>
    <location>
        <position position="456"/>
    </location>
</feature>
<feature type="sequence variant" id="VAR_065569" description="In SCOTD; partial loss of activity; the mutant retains half of the activity of the wild-type at 30 degrees; dbSNP:rs1327401976." evidence="6">
    <original>R</original>
    <variation>C</variation>
    <location>
        <position position="468"/>
    </location>
</feature>
<feature type="sequence conflict" description="In Ref. 4; BAG35249." evidence="15" ref="4">
    <original>D</original>
    <variation>G</variation>
    <location>
        <position position="95"/>
    </location>
</feature>
<feature type="strand" evidence="18">
    <location>
        <begin position="41"/>
        <end position="44"/>
    </location>
</feature>
<feature type="helix" evidence="18">
    <location>
        <begin position="46"/>
        <end position="50"/>
    </location>
</feature>
<feature type="strand" evidence="18">
    <location>
        <begin position="58"/>
        <end position="61"/>
    </location>
</feature>
<feature type="helix" evidence="18">
    <location>
        <begin position="71"/>
        <end position="80"/>
    </location>
</feature>
<feature type="strand" evidence="18">
    <location>
        <begin position="84"/>
        <end position="88"/>
    </location>
</feature>
<feature type="helix" evidence="18">
    <location>
        <begin position="100"/>
        <end position="104"/>
    </location>
</feature>
<feature type="strand" evidence="18">
    <location>
        <begin position="108"/>
        <end position="114"/>
    </location>
</feature>
<feature type="helix" evidence="18">
    <location>
        <begin position="120"/>
        <end position="127"/>
    </location>
</feature>
<feature type="strand" evidence="18">
    <location>
        <begin position="130"/>
        <end position="135"/>
    </location>
</feature>
<feature type="helix" evidence="18">
    <location>
        <begin position="138"/>
        <end position="150"/>
    </location>
</feature>
<feature type="strand" evidence="18">
    <location>
        <begin position="154"/>
        <end position="158"/>
    </location>
</feature>
<feature type="turn" evidence="18">
    <location>
        <begin position="159"/>
        <end position="162"/>
    </location>
</feature>
<feature type="helix" evidence="18">
    <location>
        <begin position="164"/>
        <end position="167"/>
    </location>
</feature>
<feature type="strand" evidence="18">
    <location>
        <begin position="171"/>
        <end position="174"/>
    </location>
</feature>
<feature type="strand" evidence="18">
    <location>
        <begin position="178"/>
        <end position="183"/>
    </location>
</feature>
<feature type="strand" evidence="18">
    <location>
        <begin position="189"/>
        <end position="192"/>
    </location>
</feature>
<feature type="strand" evidence="18">
    <location>
        <begin position="195"/>
        <end position="201"/>
    </location>
</feature>
<feature type="strand" evidence="18">
    <location>
        <begin position="205"/>
        <end position="211"/>
    </location>
</feature>
<feature type="strand" evidence="18">
    <location>
        <begin position="213"/>
        <end position="216"/>
    </location>
</feature>
<feature type="helix" evidence="18">
    <location>
        <begin position="225"/>
        <end position="227"/>
    </location>
</feature>
<feature type="helix" evidence="18">
    <location>
        <begin position="231"/>
        <end position="234"/>
    </location>
</feature>
<feature type="strand" evidence="18">
    <location>
        <begin position="237"/>
        <end position="249"/>
    </location>
</feature>
<feature type="helix" evidence="18">
    <location>
        <begin position="256"/>
        <end position="258"/>
    </location>
</feature>
<feature type="helix" evidence="18">
    <location>
        <begin position="263"/>
        <end position="265"/>
    </location>
</feature>
<feature type="strand" evidence="18">
    <location>
        <begin position="268"/>
        <end position="271"/>
    </location>
</feature>
<feature type="helix" evidence="18">
    <location>
        <begin position="300"/>
        <end position="309"/>
    </location>
</feature>
<feature type="helix" evidence="18">
    <location>
        <begin position="310"/>
        <end position="312"/>
    </location>
</feature>
<feature type="strand" evidence="18">
    <location>
        <begin position="318"/>
        <end position="321"/>
    </location>
</feature>
<feature type="helix" evidence="18">
    <location>
        <begin position="325"/>
        <end position="329"/>
    </location>
</feature>
<feature type="helix" evidence="18">
    <location>
        <begin position="330"/>
        <end position="332"/>
    </location>
</feature>
<feature type="strand" evidence="18">
    <location>
        <begin position="340"/>
        <end position="343"/>
    </location>
</feature>
<feature type="turn" evidence="18">
    <location>
        <begin position="344"/>
        <end position="346"/>
    </location>
</feature>
<feature type="strand" evidence="18">
    <location>
        <begin position="347"/>
        <end position="350"/>
    </location>
</feature>
<feature type="helix" evidence="18">
    <location>
        <begin position="356"/>
        <end position="358"/>
    </location>
</feature>
<feature type="strand" evidence="18">
    <location>
        <begin position="368"/>
        <end position="370"/>
    </location>
</feature>
<feature type="strand" evidence="18">
    <location>
        <begin position="373"/>
        <end position="379"/>
    </location>
</feature>
<feature type="helix" evidence="18">
    <location>
        <begin position="382"/>
        <end position="390"/>
    </location>
</feature>
<feature type="strand" evidence="18">
    <location>
        <begin position="395"/>
        <end position="399"/>
    </location>
</feature>
<feature type="strand" evidence="18">
    <location>
        <begin position="402"/>
        <end position="405"/>
    </location>
</feature>
<feature type="strand" evidence="18">
    <location>
        <begin position="413"/>
        <end position="415"/>
    </location>
</feature>
<feature type="turn" evidence="18">
    <location>
        <begin position="416"/>
        <end position="418"/>
    </location>
</feature>
<feature type="helix" evidence="18">
    <location>
        <begin position="426"/>
        <end position="429"/>
    </location>
</feature>
<feature type="strand" evidence="18">
    <location>
        <begin position="435"/>
        <end position="440"/>
    </location>
</feature>
<feature type="helix" evidence="18">
    <location>
        <begin position="446"/>
        <end position="448"/>
    </location>
</feature>
<feature type="strand" evidence="18">
    <location>
        <begin position="450"/>
        <end position="455"/>
    </location>
</feature>
<feature type="strand" evidence="18">
    <location>
        <begin position="461"/>
        <end position="464"/>
    </location>
</feature>
<feature type="strand" evidence="18">
    <location>
        <begin position="468"/>
        <end position="470"/>
    </location>
</feature>
<feature type="strand" evidence="18">
    <location>
        <begin position="472"/>
        <end position="479"/>
    </location>
</feature>
<feature type="turn" evidence="18">
    <location>
        <begin position="480"/>
        <end position="482"/>
    </location>
</feature>
<feature type="strand" evidence="18">
    <location>
        <begin position="483"/>
        <end position="489"/>
    </location>
</feature>
<feature type="helix" evidence="18">
    <location>
        <begin position="495"/>
        <end position="499"/>
    </location>
</feature>
<feature type="strand" evidence="18">
    <location>
        <begin position="502"/>
        <end position="504"/>
    </location>
</feature>
<feature type="strand" evidence="18">
    <location>
        <begin position="507"/>
        <end position="514"/>
    </location>
</feature>
<name>SCOT1_HUMAN</name>
<organism>
    <name type="scientific">Homo sapiens</name>
    <name type="common">Human</name>
    <dbReference type="NCBI Taxonomy" id="9606"/>
    <lineage>
        <taxon>Eukaryota</taxon>
        <taxon>Metazoa</taxon>
        <taxon>Chordata</taxon>
        <taxon>Craniata</taxon>
        <taxon>Vertebrata</taxon>
        <taxon>Euteleostomi</taxon>
        <taxon>Mammalia</taxon>
        <taxon>Eutheria</taxon>
        <taxon>Euarchontoglires</taxon>
        <taxon>Primates</taxon>
        <taxon>Haplorrhini</taxon>
        <taxon>Catarrhini</taxon>
        <taxon>Hominidae</taxon>
        <taxon>Homo</taxon>
    </lineage>
</organism>
<dbReference type="EC" id="2.8.3.5" evidence="5"/>
<dbReference type="EMBL" id="U62961">
    <property type="protein sequence ID" value="AAB07366.1"/>
    <property type="molecule type" value="mRNA"/>
</dbReference>
<dbReference type="EMBL" id="AB029576">
    <property type="protein sequence ID" value="BAB13733.1"/>
    <property type="molecule type" value="Genomic_DNA"/>
</dbReference>
<dbReference type="EMBL" id="AK298352">
    <property type="protein sequence ID" value="BAH12764.1"/>
    <property type="molecule type" value="mRNA"/>
</dbReference>
<dbReference type="EMBL" id="AK312327">
    <property type="protein sequence ID" value="BAG35249.1"/>
    <property type="molecule type" value="mRNA"/>
</dbReference>
<dbReference type="EMBL" id="AK315902">
    <property type="protein sequence ID" value="BAH14273.1"/>
    <property type="molecule type" value="mRNA"/>
</dbReference>
<dbReference type="EMBL" id="AC008817">
    <property type="status" value="NOT_ANNOTATED_CDS"/>
    <property type="molecule type" value="Genomic_DNA"/>
</dbReference>
<dbReference type="EMBL" id="AC034222">
    <property type="status" value="NOT_ANNOTATED_CDS"/>
    <property type="molecule type" value="Genomic_DNA"/>
</dbReference>
<dbReference type="EMBL" id="AC114946">
    <property type="status" value="NOT_ANNOTATED_CDS"/>
    <property type="molecule type" value="Genomic_DNA"/>
</dbReference>
<dbReference type="EMBL" id="BC009001">
    <property type="protein sequence ID" value="AAH09001.1"/>
    <property type="molecule type" value="mRNA"/>
</dbReference>
<dbReference type="CCDS" id="CCDS3937.1">
    <molecule id="P55809-1"/>
</dbReference>
<dbReference type="RefSeq" id="NP_000427.1">
    <molecule id="P55809-1"/>
    <property type="nucleotide sequence ID" value="NM_000436.4"/>
</dbReference>
<dbReference type="PDB" id="3DLX">
    <property type="method" value="X-ray"/>
    <property type="resolution" value="2.20 A"/>
    <property type="chains" value="A/B/C/D=40-520"/>
</dbReference>
<dbReference type="PDBsum" id="3DLX"/>
<dbReference type="SMR" id="P55809"/>
<dbReference type="BioGRID" id="111059">
    <property type="interactions" value="123"/>
</dbReference>
<dbReference type="FunCoup" id="P55809">
    <property type="interactions" value="1145"/>
</dbReference>
<dbReference type="IntAct" id="P55809">
    <property type="interactions" value="31"/>
</dbReference>
<dbReference type="MINT" id="P55809"/>
<dbReference type="STRING" id="9606.ENSP00000196371"/>
<dbReference type="DrugBank" id="DB02731">
    <property type="generic name" value="Ethylmercurithiosalicylic acid"/>
</dbReference>
<dbReference type="DrugBank" id="DB00139">
    <property type="generic name" value="Succinic acid"/>
</dbReference>
<dbReference type="GlyGen" id="P55809">
    <property type="glycosylation" value="1 site, 1 O-linked glycan (1 site)"/>
</dbReference>
<dbReference type="iPTMnet" id="P55809"/>
<dbReference type="PhosphoSitePlus" id="P55809"/>
<dbReference type="SwissPalm" id="P55809"/>
<dbReference type="BioMuta" id="OXCT1"/>
<dbReference type="DMDM" id="2492998"/>
<dbReference type="jPOST" id="P55809"/>
<dbReference type="MassIVE" id="P55809"/>
<dbReference type="PaxDb" id="9606-ENSP00000196371"/>
<dbReference type="PeptideAtlas" id="P55809"/>
<dbReference type="ProteomicsDB" id="56871">
    <molecule id="P55809-1"/>
</dbReference>
<dbReference type="ProteomicsDB" id="6656"/>
<dbReference type="Pumba" id="P55809"/>
<dbReference type="Antibodypedia" id="1558">
    <property type="antibodies" value="186 antibodies from 27 providers"/>
</dbReference>
<dbReference type="DNASU" id="5019"/>
<dbReference type="Ensembl" id="ENST00000196371.10">
    <molecule id="P55809-1"/>
    <property type="protein sequence ID" value="ENSP00000196371.5"/>
    <property type="gene ID" value="ENSG00000083720.13"/>
</dbReference>
<dbReference type="Ensembl" id="ENST00000510634.5">
    <molecule id="P55809-2"/>
    <property type="protein sequence ID" value="ENSP00000423144.1"/>
    <property type="gene ID" value="ENSG00000083720.13"/>
</dbReference>
<dbReference type="Ensembl" id="ENST00000512084.5">
    <molecule id="P55809-2"/>
    <property type="protein sequence ID" value="ENSP00000421143.1"/>
    <property type="gene ID" value="ENSG00000083720.13"/>
</dbReference>
<dbReference type="GeneID" id="5019"/>
<dbReference type="KEGG" id="hsa:5019"/>
<dbReference type="MANE-Select" id="ENST00000196371.10">
    <property type="protein sequence ID" value="ENSP00000196371.5"/>
    <property type="RefSeq nucleotide sequence ID" value="NM_000436.4"/>
    <property type="RefSeq protein sequence ID" value="NP_000427.1"/>
</dbReference>
<dbReference type="UCSC" id="uc003jmn.4">
    <molecule id="P55809-1"/>
    <property type="organism name" value="human"/>
</dbReference>
<dbReference type="AGR" id="HGNC:8527"/>
<dbReference type="CTD" id="5019"/>
<dbReference type="DisGeNET" id="5019"/>
<dbReference type="GeneCards" id="OXCT1"/>
<dbReference type="HGNC" id="HGNC:8527">
    <property type="gene designation" value="OXCT1"/>
</dbReference>
<dbReference type="HPA" id="ENSG00000083720">
    <property type="expression patterns" value="Tissue enhanced (heart)"/>
</dbReference>
<dbReference type="MalaCards" id="OXCT1"/>
<dbReference type="MIM" id="245050">
    <property type="type" value="phenotype"/>
</dbReference>
<dbReference type="MIM" id="601424">
    <property type="type" value="gene"/>
</dbReference>
<dbReference type="neXtProt" id="NX_P55809"/>
<dbReference type="OpenTargets" id="ENSG00000083720"/>
<dbReference type="Orphanet" id="832">
    <property type="disease" value="Succinyl-CoA:3-oxoacid CoA transferase deficiency"/>
</dbReference>
<dbReference type="PharmGKB" id="PA32855"/>
<dbReference type="VEuPathDB" id="HostDB:ENSG00000083720"/>
<dbReference type="eggNOG" id="KOG3822">
    <property type="taxonomic scope" value="Eukaryota"/>
</dbReference>
<dbReference type="GeneTree" id="ENSGT00390000009130"/>
<dbReference type="HOGENOM" id="CLU_019942_1_3_1"/>
<dbReference type="InParanoid" id="P55809"/>
<dbReference type="OMA" id="VKTMGQI"/>
<dbReference type="OrthoDB" id="1933379at2759"/>
<dbReference type="PAN-GO" id="P55809">
    <property type="GO annotations" value="3 GO annotations based on evolutionary models"/>
</dbReference>
<dbReference type="PhylomeDB" id="P55809"/>
<dbReference type="TreeFam" id="TF313991"/>
<dbReference type="BioCyc" id="MetaCyc:HS01447-MONOMER"/>
<dbReference type="BRENDA" id="2.8.3.5">
    <property type="organism ID" value="2681"/>
</dbReference>
<dbReference type="PathwayCommons" id="P55809"/>
<dbReference type="Reactome" id="R-HSA-77108">
    <property type="pathway name" value="Utilization of Ketone Bodies"/>
</dbReference>
<dbReference type="Reactome" id="R-HSA-9837999">
    <property type="pathway name" value="Mitochondrial protein degradation"/>
</dbReference>
<dbReference type="SignaLink" id="P55809"/>
<dbReference type="UniPathway" id="UPA00929">
    <property type="reaction ID" value="UER00894"/>
</dbReference>
<dbReference type="BioGRID-ORCS" id="5019">
    <property type="hits" value="16 hits in 1162 CRISPR screens"/>
</dbReference>
<dbReference type="ChiTaRS" id="OXCT1">
    <property type="organism name" value="human"/>
</dbReference>
<dbReference type="EvolutionaryTrace" id="P55809"/>
<dbReference type="GeneWiki" id="OXCT1"/>
<dbReference type="GenomeRNAi" id="5019"/>
<dbReference type="Pharos" id="P55809">
    <property type="development level" value="Tbio"/>
</dbReference>
<dbReference type="PRO" id="PR:P55809"/>
<dbReference type="Proteomes" id="UP000005640">
    <property type="component" value="Chromosome 5"/>
</dbReference>
<dbReference type="RNAct" id="P55809">
    <property type="molecule type" value="protein"/>
</dbReference>
<dbReference type="Bgee" id="ENSG00000083720">
    <property type="expression patterns" value="Expressed in left ventricle myocardium and 205 other cell types or tissues"/>
</dbReference>
<dbReference type="ExpressionAtlas" id="P55809">
    <property type="expression patterns" value="baseline and differential"/>
</dbReference>
<dbReference type="GO" id="GO:0005759">
    <property type="term" value="C:mitochondrial matrix"/>
    <property type="evidence" value="ECO:0000304"/>
    <property type="project" value="Reactome"/>
</dbReference>
<dbReference type="GO" id="GO:0005739">
    <property type="term" value="C:mitochondrion"/>
    <property type="evidence" value="ECO:0000314"/>
    <property type="project" value="HPA"/>
</dbReference>
<dbReference type="GO" id="GO:0042802">
    <property type="term" value="F:identical protein binding"/>
    <property type="evidence" value="ECO:0007669"/>
    <property type="project" value="Ensembl"/>
</dbReference>
<dbReference type="GO" id="GO:0008260">
    <property type="term" value="F:succinyl-CoA:3-oxo-acid CoA-transferase activity"/>
    <property type="evidence" value="ECO:0000315"/>
    <property type="project" value="UniProtKB"/>
</dbReference>
<dbReference type="GO" id="GO:0060612">
    <property type="term" value="P:adipose tissue development"/>
    <property type="evidence" value="ECO:0007669"/>
    <property type="project" value="Ensembl"/>
</dbReference>
<dbReference type="GO" id="GO:0007507">
    <property type="term" value="P:heart development"/>
    <property type="evidence" value="ECO:0007669"/>
    <property type="project" value="Ensembl"/>
</dbReference>
<dbReference type="GO" id="GO:0046952">
    <property type="term" value="P:ketone body catabolic process"/>
    <property type="evidence" value="ECO:0007669"/>
    <property type="project" value="Ensembl"/>
</dbReference>
<dbReference type="GO" id="GO:1902224">
    <property type="term" value="P:ketone body metabolic process"/>
    <property type="evidence" value="ECO:0000315"/>
    <property type="project" value="UniProtKB"/>
</dbReference>
<dbReference type="GO" id="GO:0042182">
    <property type="term" value="P:ketone catabolic process"/>
    <property type="evidence" value="ECO:0007669"/>
    <property type="project" value="Ensembl"/>
</dbReference>
<dbReference type="GO" id="GO:0035774">
    <property type="term" value="P:positive regulation of insulin secretion involved in cellular response to glucose stimulus"/>
    <property type="evidence" value="ECO:0007669"/>
    <property type="project" value="Ensembl"/>
</dbReference>
<dbReference type="GO" id="GO:0014823">
    <property type="term" value="P:response to activity"/>
    <property type="evidence" value="ECO:0007669"/>
    <property type="project" value="Ensembl"/>
</dbReference>
<dbReference type="GO" id="GO:0045471">
    <property type="term" value="P:response to ethanol"/>
    <property type="evidence" value="ECO:0007669"/>
    <property type="project" value="Ensembl"/>
</dbReference>
<dbReference type="GO" id="GO:0009725">
    <property type="term" value="P:response to hormone"/>
    <property type="evidence" value="ECO:0007669"/>
    <property type="project" value="Ensembl"/>
</dbReference>
<dbReference type="GO" id="GO:0007584">
    <property type="term" value="P:response to nutrient"/>
    <property type="evidence" value="ECO:0007669"/>
    <property type="project" value="Ensembl"/>
</dbReference>
<dbReference type="GO" id="GO:0042594">
    <property type="term" value="P:response to starvation"/>
    <property type="evidence" value="ECO:0007669"/>
    <property type="project" value="Ensembl"/>
</dbReference>
<dbReference type="GO" id="GO:0009410">
    <property type="term" value="P:response to xenobiotic stimulus"/>
    <property type="evidence" value="ECO:0007669"/>
    <property type="project" value="Ensembl"/>
</dbReference>
<dbReference type="FunFam" id="3.40.1080.10:FF:000001">
    <property type="entry name" value="Succinyl-coa:3-ketoacid-coenzyme a transferase subunit b"/>
    <property type="match status" value="1"/>
</dbReference>
<dbReference type="FunFam" id="3.40.1080.10:FF:000002">
    <property type="entry name" value="Succinyl-CoA:3-ketoacid-coenzyme A transferase, mitochondrial"/>
    <property type="match status" value="1"/>
</dbReference>
<dbReference type="Gene3D" id="3.40.1080.10">
    <property type="entry name" value="Glutaconate Coenzyme A-transferase"/>
    <property type="match status" value="2"/>
</dbReference>
<dbReference type="InterPro" id="IPR012792">
    <property type="entry name" value="3-oxoacid_CoA-transf_A"/>
</dbReference>
<dbReference type="InterPro" id="IPR012791">
    <property type="entry name" value="3-oxoacid_CoA-transf_B"/>
</dbReference>
<dbReference type="InterPro" id="IPR014388">
    <property type="entry name" value="3-oxoacid_CoA-transferase"/>
</dbReference>
<dbReference type="InterPro" id="IPR004165">
    <property type="entry name" value="CoA_trans_fam_I"/>
</dbReference>
<dbReference type="InterPro" id="IPR004164">
    <property type="entry name" value="CoA_transf_AS"/>
</dbReference>
<dbReference type="InterPro" id="IPR004163">
    <property type="entry name" value="CoA_transf_BS"/>
</dbReference>
<dbReference type="InterPro" id="IPR037171">
    <property type="entry name" value="NagB/RpiA_transferase-like"/>
</dbReference>
<dbReference type="NCBIfam" id="TIGR02429">
    <property type="entry name" value="pcaI_scoA_fam"/>
    <property type="match status" value="1"/>
</dbReference>
<dbReference type="NCBIfam" id="TIGR02428">
    <property type="entry name" value="pcaJ_scoB_fam"/>
    <property type="match status" value="1"/>
</dbReference>
<dbReference type="PANTHER" id="PTHR13707">
    <property type="entry name" value="KETOACID-COENZYME A TRANSFERASE"/>
    <property type="match status" value="1"/>
</dbReference>
<dbReference type="PANTHER" id="PTHR13707:SF30">
    <property type="entry name" value="SUCCINYL-COA:3-KETOACID COENZYME A TRANSFERASE 1, MITOCHONDRIAL"/>
    <property type="match status" value="1"/>
</dbReference>
<dbReference type="Pfam" id="PF01144">
    <property type="entry name" value="CoA_trans"/>
    <property type="match status" value="2"/>
</dbReference>
<dbReference type="PIRSF" id="PIRSF000858">
    <property type="entry name" value="SCOT-t"/>
    <property type="match status" value="1"/>
</dbReference>
<dbReference type="SMART" id="SM00882">
    <property type="entry name" value="CoA_trans"/>
    <property type="match status" value="2"/>
</dbReference>
<dbReference type="SUPFAM" id="SSF100950">
    <property type="entry name" value="NagB/RpiA/CoA transferase-like"/>
    <property type="match status" value="2"/>
</dbReference>
<dbReference type="PROSITE" id="PS01273">
    <property type="entry name" value="COA_TRANSF_1"/>
    <property type="match status" value="1"/>
</dbReference>
<dbReference type="PROSITE" id="PS01274">
    <property type="entry name" value="COA_TRANSF_2"/>
    <property type="match status" value="1"/>
</dbReference>
<gene>
    <name type="primary">OXCT1</name>
    <name type="synonym">OXCT</name>
    <name type="synonym">SCOT</name>
</gene>
<reference key="1">
    <citation type="journal article" date="1996" name="Am. J. Hum. Genet.">
        <title>Succinyl CoA:3-oxoacid CoA transferase (SCOT): human cDNA cloning, human chromosomal mapping to 5p13, and mutation detection in a SCOT-deficient patient.</title>
        <authorList>
            <person name="Kassovska-Bratinova S."/>
            <person name="Fukao T."/>
            <person name="Song X.-Q."/>
            <person name="Duncan A.M.V."/>
            <person name="Chen H.S."/>
            <person name="Robert M.-F."/>
            <person name="Perez-Cerda C."/>
            <person name="Ugarte M."/>
            <person name="Chartrand C."/>
            <person name="Vobecky S."/>
            <person name="Kondo N."/>
            <person name="Mitchell G.A."/>
        </authorList>
    </citation>
    <scope>NUCLEOTIDE SEQUENCE [MRNA] (ISOFORM 1)</scope>
    <scope>PARTIAL PROTEIN SEQUENCE</scope>
    <source>
        <tissue>Heart</tissue>
    </source>
</reference>
<reference key="2">
    <citation type="journal article" date="2000" name="Genomics">
        <title>Succinyl-CoA:3-ketoacid CoA transferase (SCOT): cloning of the human SCOT gene, tertiary structural modeling of the human SCOT monomer, and characterization of three pathogenic mutations.</title>
        <authorList>
            <person name="Fukao T."/>
            <person name="Mitchell G.A."/>
            <person name="Song X.-Q."/>
            <person name="Nakamura H."/>
            <person name="Kassovska-Bratinova S."/>
            <person name="Orii K.E."/>
            <person name="Wraith J.E."/>
            <person name="Besley G."/>
            <person name="Wanders R.J.A."/>
            <person name="Niezen-Koning K.E."/>
            <person name="Berry G.T."/>
            <person name="Palmieri M."/>
            <person name="Kondo N."/>
        </authorList>
    </citation>
    <scope>NUCLEOTIDE SEQUENCE [GENOMIC DNA]</scope>
    <scope>VARIANTS SCOTD GLU-219; MET-221 AND GLU-324</scope>
    <scope>FUNCTION</scope>
    <scope>CATALYTIC ACTIVITY</scope>
    <scope>SUBUNIT</scope>
</reference>
<reference key="3">
    <citation type="journal article" date="2004" name="Nature">
        <title>The DNA sequence and comparative analysis of human chromosome 5.</title>
        <authorList>
            <person name="Schmutz J."/>
            <person name="Martin J."/>
            <person name="Terry A."/>
            <person name="Couronne O."/>
            <person name="Grimwood J."/>
            <person name="Lowry S."/>
            <person name="Gordon L.A."/>
            <person name="Scott D."/>
            <person name="Xie G."/>
            <person name="Huang W."/>
            <person name="Hellsten U."/>
            <person name="Tran-Gyamfi M."/>
            <person name="She X."/>
            <person name="Prabhakar S."/>
            <person name="Aerts A."/>
            <person name="Altherr M."/>
            <person name="Bajorek E."/>
            <person name="Black S."/>
            <person name="Branscomb E."/>
            <person name="Caoile C."/>
            <person name="Challacombe J.F."/>
            <person name="Chan Y.M."/>
            <person name="Denys M."/>
            <person name="Detter J.C."/>
            <person name="Escobar J."/>
            <person name="Flowers D."/>
            <person name="Fotopulos D."/>
            <person name="Glavina T."/>
            <person name="Gomez M."/>
            <person name="Gonzales E."/>
            <person name="Goodstein D."/>
            <person name="Grigoriev I."/>
            <person name="Groza M."/>
            <person name="Hammon N."/>
            <person name="Hawkins T."/>
            <person name="Haydu L."/>
            <person name="Israni S."/>
            <person name="Jett J."/>
            <person name="Kadner K."/>
            <person name="Kimball H."/>
            <person name="Kobayashi A."/>
            <person name="Lopez F."/>
            <person name="Lou Y."/>
            <person name="Martinez D."/>
            <person name="Medina C."/>
            <person name="Morgan J."/>
            <person name="Nandkeshwar R."/>
            <person name="Noonan J.P."/>
            <person name="Pitluck S."/>
            <person name="Pollard M."/>
            <person name="Predki P."/>
            <person name="Priest J."/>
            <person name="Ramirez L."/>
            <person name="Retterer J."/>
            <person name="Rodriguez A."/>
            <person name="Rogers S."/>
            <person name="Salamov A."/>
            <person name="Salazar A."/>
            <person name="Thayer N."/>
            <person name="Tice H."/>
            <person name="Tsai M."/>
            <person name="Ustaszewska A."/>
            <person name="Vo N."/>
            <person name="Wheeler J."/>
            <person name="Wu K."/>
            <person name="Yang J."/>
            <person name="Dickson M."/>
            <person name="Cheng J.-F."/>
            <person name="Eichler E.E."/>
            <person name="Olsen A."/>
            <person name="Pennacchio L.A."/>
            <person name="Rokhsar D.S."/>
            <person name="Richardson P."/>
            <person name="Lucas S.M."/>
            <person name="Myers R.M."/>
            <person name="Rubin E.M."/>
        </authorList>
    </citation>
    <scope>NUCLEOTIDE SEQUENCE [LARGE SCALE GENOMIC DNA]</scope>
</reference>
<reference key="4">
    <citation type="journal article" date="2004" name="Nat. Genet.">
        <title>Complete sequencing and characterization of 21,243 full-length human cDNAs.</title>
        <authorList>
            <person name="Ota T."/>
            <person name="Suzuki Y."/>
            <person name="Nishikawa T."/>
            <person name="Otsuki T."/>
            <person name="Sugiyama T."/>
            <person name="Irie R."/>
            <person name="Wakamatsu A."/>
            <person name="Hayashi K."/>
            <person name="Sato H."/>
            <person name="Nagai K."/>
            <person name="Kimura K."/>
            <person name="Makita H."/>
            <person name="Sekine M."/>
            <person name="Obayashi M."/>
            <person name="Nishi T."/>
            <person name="Shibahara T."/>
            <person name="Tanaka T."/>
            <person name="Ishii S."/>
            <person name="Yamamoto J."/>
            <person name="Saito K."/>
            <person name="Kawai Y."/>
            <person name="Isono Y."/>
            <person name="Nakamura Y."/>
            <person name="Nagahari K."/>
            <person name="Murakami K."/>
            <person name="Yasuda T."/>
            <person name="Iwayanagi T."/>
            <person name="Wagatsuma M."/>
            <person name="Shiratori A."/>
            <person name="Sudo H."/>
            <person name="Hosoiri T."/>
            <person name="Kaku Y."/>
            <person name="Kodaira H."/>
            <person name="Kondo H."/>
            <person name="Sugawara M."/>
            <person name="Takahashi M."/>
            <person name="Kanda K."/>
            <person name="Yokoi T."/>
            <person name="Furuya T."/>
            <person name="Kikkawa E."/>
            <person name="Omura Y."/>
            <person name="Abe K."/>
            <person name="Kamihara K."/>
            <person name="Katsuta N."/>
            <person name="Sato K."/>
            <person name="Tanikawa M."/>
            <person name="Yamazaki M."/>
            <person name="Ninomiya K."/>
            <person name="Ishibashi T."/>
            <person name="Yamashita H."/>
            <person name="Murakawa K."/>
            <person name="Fujimori K."/>
            <person name="Tanai H."/>
            <person name="Kimata M."/>
            <person name="Watanabe M."/>
            <person name="Hiraoka S."/>
            <person name="Chiba Y."/>
            <person name="Ishida S."/>
            <person name="Ono Y."/>
            <person name="Takiguchi S."/>
            <person name="Watanabe S."/>
            <person name="Yosida M."/>
            <person name="Hotuta T."/>
            <person name="Kusano J."/>
            <person name="Kanehori K."/>
            <person name="Takahashi-Fujii A."/>
            <person name="Hara H."/>
            <person name="Tanase T.-O."/>
            <person name="Nomura Y."/>
            <person name="Togiya S."/>
            <person name="Komai F."/>
            <person name="Hara R."/>
            <person name="Takeuchi K."/>
            <person name="Arita M."/>
            <person name="Imose N."/>
            <person name="Musashino K."/>
            <person name="Yuuki H."/>
            <person name="Oshima A."/>
            <person name="Sasaki N."/>
            <person name="Aotsuka S."/>
            <person name="Yoshikawa Y."/>
            <person name="Matsunawa H."/>
            <person name="Ichihara T."/>
            <person name="Shiohata N."/>
            <person name="Sano S."/>
            <person name="Moriya S."/>
            <person name="Momiyama H."/>
            <person name="Satoh N."/>
            <person name="Takami S."/>
            <person name="Terashima Y."/>
            <person name="Suzuki O."/>
            <person name="Nakagawa S."/>
            <person name="Senoh A."/>
            <person name="Mizoguchi H."/>
            <person name="Goto Y."/>
            <person name="Shimizu F."/>
            <person name="Wakebe H."/>
            <person name="Hishigaki H."/>
            <person name="Watanabe T."/>
            <person name="Sugiyama A."/>
            <person name="Takemoto M."/>
            <person name="Kawakami B."/>
            <person name="Yamazaki M."/>
            <person name="Watanabe K."/>
            <person name="Kumagai A."/>
            <person name="Itakura S."/>
            <person name="Fukuzumi Y."/>
            <person name="Fujimori Y."/>
            <person name="Komiyama M."/>
            <person name="Tashiro H."/>
            <person name="Tanigami A."/>
            <person name="Fujiwara T."/>
            <person name="Ono T."/>
            <person name="Yamada K."/>
            <person name="Fujii Y."/>
            <person name="Ozaki K."/>
            <person name="Hirao M."/>
            <person name="Ohmori Y."/>
            <person name="Kawabata A."/>
            <person name="Hikiji T."/>
            <person name="Kobatake N."/>
            <person name="Inagaki H."/>
            <person name="Ikema Y."/>
            <person name="Okamoto S."/>
            <person name="Okitani R."/>
            <person name="Kawakami T."/>
            <person name="Noguchi S."/>
            <person name="Itoh T."/>
            <person name="Shigeta K."/>
            <person name="Senba T."/>
            <person name="Matsumura K."/>
            <person name="Nakajima Y."/>
            <person name="Mizuno T."/>
            <person name="Morinaga M."/>
            <person name="Sasaki M."/>
            <person name="Togashi T."/>
            <person name="Oyama M."/>
            <person name="Hata H."/>
            <person name="Watanabe M."/>
            <person name="Komatsu T."/>
            <person name="Mizushima-Sugano J."/>
            <person name="Satoh T."/>
            <person name="Shirai Y."/>
            <person name="Takahashi Y."/>
            <person name="Nakagawa K."/>
            <person name="Okumura K."/>
            <person name="Nagase T."/>
            <person name="Nomura N."/>
            <person name="Kikuchi H."/>
            <person name="Masuho Y."/>
            <person name="Yamashita R."/>
            <person name="Nakai K."/>
            <person name="Yada T."/>
            <person name="Nakamura Y."/>
            <person name="Ohara O."/>
            <person name="Isogai T."/>
            <person name="Sugano S."/>
        </authorList>
    </citation>
    <scope>NUCLEOTIDE SEQUENCE [LARGE SCALE MRNA] (ISOFORMS 1 AND 2)</scope>
    <source>
        <tissue>Cerebellum</tissue>
        <tissue>Kidney</tissue>
    </source>
</reference>
<reference key="5">
    <citation type="journal article" date="2004" name="Genome Res.">
        <title>The status, quality, and expansion of the NIH full-length cDNA project: the Mammalian Gene Collection (MGC).</title>
        <authorList>
            <consortium name="The MGC Project Team"/>
        </authorList>
    </citation>
    <scope>NUCLEOTIDE SEQUENCE [LARGE SCALE MRNA] (ISOFORM 1)</scope>
    <source>
        <tissue>Brain</tissue>
    </source>
</reference>
<reference key="6">
    <citation type="submission" date="1997-02" db="UniProtKB">
        <authorList>
            <person name="Reymond M.A."/>
            <person name="Sanchez J.-C."/>
            <person name="Hughes G.J."/>
            <person name="Riese J."/>
            <person name="Tortola S."/>
            <person name="Peinado M.A."/>
            <person name="Kirchner T."/>
            <person name="Hohenberger W."/>
            <person name="Hochstrasser D.F."/>
            <person name="Kockerling F."/>
        </authorList>
    </citation>
    <scope>PROTEIN SEQUENCE OF 40-50</scope>
    <source>
        <tissue>Colon</tissue>
    </source>
</reference>
<reference key="7">
    <citation type="journal article" date="1997" name="Pediatr. Res.">
        <title>Enzymes of ketone body utilization in human tissues: protein and messenger RNA levels of succinyl-coenzyme A (CoA):3-ketoacid CoA transferase and mitochondrial and cytosolic acetoacetyl-CoA thiolases.</title>
        <authorList>
            <person name="Fukao T."/>
            <person name="Song X.Q."/>
            <person name="Mitchell G.A."/>
            <person name="Yamaguchi S."/>
            <person name="Sukegawa K."/>
            <person name="Orii T."/>
            <person name="Kondo N."/>
        </authorList>
    </citation>
    <scope>TISSUE SPECIFICITY</scope>
</reference>
<reference key="8">
    <citation type="submission" date="2008-12" db="UniProtKB">
        <authorList>
            <person name="Lubec G."/>
            <person name="Afjehi-Sadat L."/>
            <person name="Chen W.-Q."/>
            <person name="Sun Y."/>
        </authorList>
    </citation>
    <scope>PROTEIN SEQUENCE OF 84-104; 111-124; 147-173; 191-211; 391-418; 422-434 AND 501-511</scope>
    <scope>IDENTIFICATION BY MASS SPECTROMETRY</scope>
    <source>
        <tissue>Brain</tissue>
        <tissue>Cajal-Retzius cell</tissue>
        <tissue>Fetal brain cortex</tissue>
    </source>
</reference>
<reference key="9">
    <citation type="journal article" date="2009" name="Science">
        <title>Lysine acetylation targets protein complexes and co-regulates major cellular functions.</title>
        <authorList>
            <person name="Choudhary C."/>
            <person name="Kumar C."/>
            <person name="Gnad F."/>
            <person name="Nielsen M.L."/>
            <person name="Rehman M."/>
            <person name="Walther T.C."/>
            <person name="Olsen J.V."/>
            <person name="Mann M."/>
        </authorList>
    </citation>
    <scope>IDENTIFICATION BY MASS SPECTROMETRY [LARGE SCALE ANALYSIS]</scope>
</reference>
<reference key="10">
    <citation type="journal article" date="2010" name="Sci. Signal.">
        <title>Quantitative phosphoproteomics reveals widespread full phosphorylation site occupancy during mitosis.</title>
        <authorList>
            <person name="Olsen J.V."/>
            <person name="Vermeulen M."/>
            <person name="Santamaria A."/>
            <person name="Kumar C."/>
            <person name="Miller M.L."/>
            <person name="Jensen L.J."/>
            <person name="Gnad F."/>
            <person name="Cox J."/>
            <person name="Jensen T.S."/>
            <person name="Nigg E.A."/>
            <person name="Brunak S."/>
            <person name="Mann M."/>
        </authorList>
    </citation>
    <scope>PHOSPHORYLATION [LARGE SCALE ANALYSIS] AT SER-170</scope>
    <scope>IDENTIFICATION BY MASS SPECTROMETRY [LARGE SCALE ANALYSIS]</scope>
    <source>
        <tissue>Cervix carcinoma</tissue>
    </source>
</reference>
<reference key="11">
    <citation type="journal article" date="2011" name="BMC Syst. Biol.">
        <title>Initial characterization of the human central proteome.</title>
        <authorList>
            <person name="Burkard T.R."/>
            <person name="Planyavsky M."/>
            <person name="Kaupe I."/>
            <person name="Breitwieser F.P."/>
            <person name="Buerckstuemmer T."/>
            <person name="Bennett K.L."/>
            <person name="Superti-Furga G."/>
            <person name="Colinge J."/>
        </authorList>
    </citation>
    <scope>IDENTIFICATION BY MASS SPECTROMETRY [LARGE SCALE ANALYSIS]</scope>
</reference>
<reference key="12">
    <citation type="journal article" date="2015" name="Proteomics">
        <title>N-terminome analysis of the human mitochondrial proteome.</title>
        <authorList>
            <person name="Vaca Jacome A.S."/>
            <person name="Rabilloud T."/>
            <person name="Schaeffer-Reiss C."/>
            <person name="Rompais M."/>
            <person name="Ayoub D."/>
            <person name="Lane L."/>
            <person name="Bairoch A."/>
            <person name="Van Dorsselaer A."/>
            <person name="Carapito C."/>
        </authorList>
    </citation>
    <scope>IDENTIFICATION BY MASS SPECTROMETRY [LARGE SCALE ANALYSIS]</scope>
</reference>
<reference key="13">
    <citation type="journal article" date="2013" name="J. Inherit. Metab. Dis.">
        <title>A structural mapping of mutations causing succinyl-CoA:3-ketoacid CoA transferase (SCOT) deficiency.</title>
        <authorList>
            <person name="Shafqat N."/>
            <person name="Kavanagh K.L."/>
            <person name="Sass J.O."/>
            <person name="Christensen E."/>
            <person name="Fukao T."/>
            <person name="Lee W.H."/>
            <person name="Oppermann U."/>
            <person name="Yue W.W."/>
        </authorList>
    </citation>
    <scope>SUBUNIT</scope>
</reference>
<reference key="14">
    <citation type="submission" date="2008-08" db="PDB data bank">
        <title>Crystal structure of human 3-oxoacid CoA transferase 1.</title>
        <authorList>
            <consortium name="Structural genomics consortium (SGC)"/>
        </authorList>
    </citation>
    <scope>X-RAY CRYSTALLOGRAPHY (2.2 ANGSTROMS) OF 40-520</scope>
</reference>
<reference key="15">
    <citation type="journal article" date="1998" name="Hum. Mutat.">
        <title>Succinyl-CoA:3-ketoacid CoA transferase (SCOT) deficiency: two pathogenic mutations, V133E and C456F, in Japanese siblings.</title>
        <authorList>
            <person name="Song X.-Q."/>
            <person name="Fukao T."/>
            <person name="Watanabe H."/>
            <person name="Shintaku H."/>
            <person name="Hirayama K."/>
            <person name="Kassovska-Bratinova S."/>
            <person name="Kondo N."/>
            <person name="Mitchell G.A."/>
        </authorList>
    </citation>
    <scope>VARIANTS SCOTD GLU-133 AND PHE-456</scope>
    <scope>VARIANT MET-58</scope>
</reference>
<reference key="16">
    <citation type="journal article" date="2011" name="Biochim. Biophys. Acta">
        <title>Clinical and molecular characterization of five patients with succinyl-CoA:3-ketoacid CoA transferase (SCOT) deficiency.</title>
        <authorList>
            <person name="Fukao T."/>
            <person name="Sass J.O."/>
            <person name="Kursula P."/>
            <person name="Thimm E."/>
            <person name="Wendel U."/>
            <person name="Ficicioglu C."/>
            <person name="Monastiri K."/>
            <person name="Guffon N."/>
            <person name="Baric I."/>
            <person name="Zabot M.T."/>
            <person name="Kondo N."/>
        </authorList>
    </citation>
    <scope>VARIANTS SCOTD VAL-215; ASN-226; PRO-327; PHE-404; PRO-405 AND CYS-468</scope>
    <scope>VARIANT MET-58</scope>
    <scope>CHARACTERIZATION OF VARIANTS SCOTD VAL-215; ASN-226; PRO-327; PHE-404; PRO-405 AND CYS-468</scope>
</reference>
<reference key="17">
    <citation type="journal article" date="2018" name="J. Pediatr. Intensive Care">
        <title>A Case of Succinyl-CoA:3-Oxoacid CoA Transferase Deficiency Presenting with Severe Acidosis in a 14-Month-Old Female: Evidence for Pathogenicity of a Point Mutation in the OXCT1 Gene.</title>
        <authorList>
            <person name="Zheng D.J."/>
            <person name="Hooper M."/>
            <person name="Spencer-Manzon M."/>
            <person name="Pierce R.W."/>
        </authorList>
    </citation>
    <scope>VARIANT SCOTD PHE-245</scope>
</reference>
<reference key="18">
    <citation type="journal article" date="2021" name="Biochimie">
        <title>Succinyl-CoA:3-oxoacid coenzyme A transferase (SCOT) deficiency: A rare and potentially fatal metabolic disease.</title>
        <authorList>
            <person name="Gruenert S.C."/>
            <person name="Foster W."/>
            <person name="Schumann A."/>
            <person name="Lund A."/>
            <person name="Pontes C."/>
            <person name="Roloff S."/>
            <person name="Weinhold N."/>
            <person name="Yue W.W."/>
            <person name="AlAsmari A."/>
            <person name="Obaid O.A."/>
            <person name="Faqeih E.A."/>
            <person name="Stuebbe L."/>
            <person name="Yamamoto R."/>
            <person name="Gemperle-Britschgi C."/>
            <person name="Walter M."/>
            <person name="Spiekerkoetter U."/>
            <person name="Mackinnon S."/>
            <person name="Sass J.O."/>
        </authorList>
    </citation>
    <scope>VARIANTS SCOTD 124-ARG--ASN-520 DEL; LYS-270; ALA-280 AND MET-437</scope>
</reference>
<evidence type="ECO:0000250" key="1">
    <source>
        <dbReference type="UniProtKB" id="B2GV06"/>
    </source>
</evidence>
<evidence type="ECO:0000250" key="2">
    <source>
        <dbReference type="UniProtKB" id="Q29551"/>
    </source>
</evidence>
<evidence type="ECO:0000250" key="3">
    <source>
        <dbReference type="UniProtKB" id="Q9D0K2"/>
    </source>
</evidence>
<evidence type="ECO:0000255" key="4">
    <source>
        <dbReference type="PROSITE-ProRule" id="PRU10034"/>
    </source>
</evidence>
<evidence type="ECO:0000269" key="5">
    <source>
    </source>
</evidence>
<evidence type="ECO:0000269" key="6">
    <source>
    </source>
</evidence>
<evidence type="ECO:0000269" key="7">
    <source>
    </source>
</evidence>
<evidence type="ECO:0000269" key="8">
    <source>
    </source>
</evidence>
<evidence type="ECO:0000269" key="9">
    <source>
    </source>
</evidence>
<evidence type="ECO:0000269" key="10">
    <source>
    </source>
</evidence>
<evidence type="ECO:0000269" key="11">
    <source>
    </source>
</evidence>
<evidence type="ECO:0000269" key="12">
    <source ref="6"/>
</evidence>
<evidence type="ECO:0000303" key="13">
    <source>
    </source>
</evidence>
<evidence type="ECO:0000303" key="14">
    <source>
    </source>
</evidence>
<evidence type="ECO:0000305" key="15"/>
<evidence type="ECO:0000305" key="16">
    <source>
    </source>
</evidence>
<evidence type="ECO:0007744" key="17">
    <source>
    </source>
</evidence>
<evidence type="ECO:0007829" key="18">
    <source>
        <dbReference type="PDB" id="3DLX"/>
    </source>
</evidence>
<keyword id="KW-0002">3D-structure</keyword>
<keyword id="KW-0025">Alternative splicing</keyword>
<keyword id="KW-0903">Direct protein sequencing</keyword>
<keyword id="KW-0225">Disease variant</keyword>
<keyword id="KW-0443">Lipid metabolism</keyword>
<keyword id="KW-0496">Mitochondrion</keyword>
<keyword id="KW-0597">Phosphoprotein</keyword>
<keyword id="KW-1267">Proteomics identification</keyword>
<keyword id="KW-1185">Reference proteome</keyword>
<keyword id="KW-0808">Transferase</keyword>
<keyword id="KW-0809">Transit peptide</keyword>
<protein>
    <recommendedName>
        <fullName evidence="13">Succinyl-CoA:3-ketoacid coenzyme A transferase 1, mitochondrial</fullName>
        <shortName evidence="13">SCOT</shortName>
        <ecNumber evidence="5">2.8.3.5</ecNumber>
    </recommendedName>
    <alternativeName>
        <fullName>3-oxoacid CoA-transferase 1</fullName>
    </alternativeName>
    <alternativeName>
        <fullName>Somatic-type succinyl-CoA:3-oxoacid CoA-transferase</fullName>
        <shortName>SCOT-s</shortName>
    </alternativeName>
    <alternativeName>
        <fullName>Succinyl-CoA:3-oxoacid CoA transferase</fullName>
    </alternativeName>
</protein>
<proteinExistence type="evidence at protein level"/>
<comment type="function">
    <text evidence="2 5">Key enzyme for ketone body catabolism. Catalyzes the first, rate-limiting step of ketone body utilization in extrahepatic tissues, by transferring coenzyme A (CoA) from a donor thiolester species (succinyl-CoA) to an acceptor carboxylate (acetoacetate), and produces acetoacetyl-CoA. Acetoacetyl-CoA is further metabolized by acetoacetyl-CoA thiolase into two acetyl-CoA molecules which enter the citric acid cycle for energy production (PubMed:10964512). Forms a dimeric enzyme where both of the subunits are able to form enzyme-CoA thiolester intermediates, but only one subunit is competent to transfer the CoA moiety to the acceptor carboxylate (3-oxo acid) and produce a new acyl-CoA. Formation of the enzyme-CoA intermediate proceeds via an unstable anhydride species formed between the carboxylate groups of the enzyme and substrate (By similarity).</text>
</comment>
<comment type="catalytic activity">
    <reaction evidence="5">
        <text>a 3-oxo acid + succinyl-CoA = a 3-oxoacyl-CoA + succinate</text>
        <dbReference type="Rhea" id="RHEA:24564"/>
        <dbReference type="ChEBI" id="CHEBI:30031"/>
        <dbReference type="ChEBI" id="CHEBI:35973"/>
        <dbReference type="ChEBI" id="CHEBI:57292"/>
        <dbReference type="ChEBI" id="CHEBI:90726"/>
        <dbReference type="EC" id="2.8.3.5"/>
    </reaction>
    <physiologicalReaction direction="left-to-right" evidence="16">
        <dbReference type="Rhea" id="RHEA:24565"/>
    </physiologicalReaction>
</comment>
<comment type="catalytic activity">
    <reaction evidence="5">
        <text>acetoacetate + succinyl-CoA = acetoacetyl-CoA + succinate</text>
        <dbReference type="Rhea" id="RHEA:25480"/>
        <dbReference type="ChEBI" id="CHEBI:13705"/>
        <dbReference type="ChEBI" id="CHEBI:30031"/>
        <dbReference type="ChEBI" id="CHEBI:57286"/>
        <dbReference type="ChEBI" id="CHEBI:57292"/>
        <dbReference type="EC" id="2.8.3.5"/>
    </reaction>
    <physiologicalReaction direction="left-to-right" evidence="5">
        <dbReference type="Rhea" id="RHEA:25481"/>
    </physiologicalReaction>
</comment>
<comment type="pathway">
    <text evidence="16">Ketone metabolism; succinyl-CoA degradation; acetoacetyl-CoA from succinyl-CoA: step 1/1.</text>
</comment>
<comment type="subunit">
    <text evidence="2 5 7">Homodimer (PubMed:10964512, PubMed:23420214). Only one subunit is competent to transfer the CoA moiety to the acceptor carboxylate (3-oxo acid) (By similarity).</text>
</comment>
<comment type="subcellular location">
    <subcellularLocation>
        <location evidence="1">Mitochondrion</location>
    </subcellularLocation>
</comment>
<comment type="alternative products">
    <event type="alternative splicing"/>
    <isoform>
        <id>P55809-1</id>
        <name>1</name>
        <sequence type="displayed"/>
    </isoform>
    <isoform>
        <id>P55809-2</id>
        <name>2</name>
        <sequence type="described" ref="VSP_056310"/>
    </isoform>
</comment>
<comment type="tissue specificity">
    <text evidence="10">Abundant in heart, followed in order by brain, kidney, skeletal muscle, and lung, whereas in liver it is undetectable. Expressed (at protein level) in all tissues (except in liver), most abundant in myocardium, then brain, kidney, adrenal glands, skeletal muscle and lung; also detectable in leukocytes and fibroblasts.</text>
</comment>
<comment type="disease" evidence="5 6 8 9 11">
    <disease id="DI-01863">
        <name>Succinyl-CoA:3-oxoacid CoA transferase deficiency</name>
        <acronym>SCOTD</acronym>
        <description>A disorder of ketone body metabolism, characterized by episodic ketoacidosis. Patients are usually asymptomatic between episodes.</description>
        <dbReference type="MIM" id="245050"/>
    </disease>
    <text>The disease is caused by variants affecting the gene represented in this entry.</text>
</comment>
<comment type="similarity">
    <text evidence="15">Belongs to the 3-oxoacid CoA-transferase family.</text>
</comment>
<accession>P55809</accession>
<accession>B2R5V2</accession>
<accession>B7Z528</accession>